<proteinExistence type="inferred from homology"/>
<reference key="1">
    <citation type="journal article" date="2004" name="Mol. Phylogenet. Evol.">
        <title>Molecular phylogeny of the tribe Bovini (Bovidae, Bovinae) and the taxonomic status of the Kouprey, Bos sauveli Urbain 1937.</title>
        <authorList>
            <person name="Hassanin A."/>
            <person name="Ropiquet A."/>
        </authorList>
    </citation>
    <scope>NUCLEOTIDE SEQUENCE [GENOMIC DNA]</scope>
</reference>
<dbReference type="EMBL" id="AY689187">
    <property type="protein sequence ID" value="AAV51237.1"/>
    <property type="molecule type" value="Genomic_DNA"/>
</dbReference>
<dbReference type="SMR" id="Q5QD76"/>
<dbReference type="GO" id="GO:0005743">
    <property type="term" value="C:mitochondrial inner membrane"/>
    <property type="evidence" value="ECO:0007669"/>
    <property type="project" value="UniProtKB-SubCell"/>
</dbReference>
<dbReference type="GO" id="GO:0045275">
    <property type="term" value="C:respiratory chain complex III"/>
    <property type="evidence" value="ECO:0007669"/>
    <property type="project" value="InterPro"/>
</dbReference>
<dbReference type="GO" id="GO:0046872">
    <property type="term" value="F:metal ion binding"/>
    <property type="evidence" value="ECO:0007669"/>
    <property type="project" value="UniProtKB-KW"/>
</dbReference>
<dbReference type="GO" id="GO:0008121">
    <property type="term" value="F:ubiquinol-cytochrome-c reductase activity"/>
    <property type="evidence" value="ECO:0007669"/>
    <property type="project" value="InterPro"/>
</dbReference>
<dbReference type="GO" id="GO:0006122">
    <property type="term" value="P:mitochondrial electron transport, ubiquinol to cytochrome c"/>
    <property type="evidence" value="ECO:0007669"/>
    <property type="project" value="TreeGrafter"/>
</dbReference>
<dbReference type="CDD" id="cd00290">
    <property type="entry name" value="cytochrome_b_C"/>
    <property type="match status" value="1"/>
</dbReference>
<dbReference type="CDD" id="cd00284">
    <property type="entry name" value="Cytochrome_b_N"/>
    <property type="match status" value="1"/>
</dbReference>
<dbReference type="FunFam" id="1.20.810.10:FF:000002">
    <property type="entry name" value="Cytochrome b"/>
    <property type="match status" value="1"/>
</dbReference>
<dbReference type="Gene3D" id="1.20.810.10">
    <property type="entry name" value="Cytochrome Bc1 Complex, Chain C"/>
    <property type="match status" value="1"/>
</dbReference>
<dbReference type="InterPro" id="IPR005798">
    <property type="entry name" value="Cyt_b/b6_C"/>
</dbReference>
<dbReference type="InterPro" id="IPR036150">
    <property type="entry name" value="Cyt_b/b6_C_sf"/>
</dbReference>
<dbReference type="InterPro" id="IPR005797">
    <property type="entry name" value="Cyt_b/b6_N"/>
</dbReference>
<dbReference type="InterPro" id="IPR027387">
    <property type="entry name" value="Cytb/b6-like_sf"/>
</dbReference>
<dbReference type="InterPro" id="IPR030689">
    <property type="entry name" value="Cytochrome_b"/>
</dbReference>
<dbReference type="InterPro" id="IPR048260">
    <property type="entry name" value="Cytochrome_b_C_euk/bac"/>
</dbReference>
<dbReference type="InterPro" id="IPR048259">
    <property type="entry name" value="Cytochrome_b_N_euk/bac"/>
</dbReference>
<dbReference type="InterPro" id="IPR016174">
    <property type="entry name" value="Di-haem_cyt_TM"/>
</dbReference>
<dbReference type="PANTHER" id="PTHR19271">
    <property type="entry name" value="CYTOCHROME B"/>
    <property type="match status" value="1"/>
</dbReference>
<dbReference type="PANTHER" id="PTHR19271:SF16">
    <property type="entry name" value="CYTOCHROME B"/>
    <property type="match status" value="1"/>
</dbReference>
<dbReference type="Pfam" id="PF00032">
    <property type="entry name" value="Cytochrom_B_C"/>
    <property type="match status" value="1"/>
</dbReference>
<dbReference type="Pfam" id="PF00033">
    <property type="entry name" value="Cytochrome_B"/>
    <property type="match status" value="1"/>
</dbReference>
<dbReference type="PIRSF" id="PIRSF038885">
    <property type="entry name" value="COB"/>
    <property type="match status" value="1"/>
</dbReference>
<dbReference type="SUPFAM" id="SSF81648">
    <property type="entry name" value="a domain/subunit of cytochrome bc1 complex (Ubiquinol-cytochrome c reductase)"/>
    <property type="match status" value="1"/>
</dbReference>
<dbReference type="SUPFAM" id="SSF81342">
    <property type="entry name" value="Transmembrane di-heme cytochromes"/>
    <property type="match status" value="1"/>
</dbReference>
<dbReference type="PROSITE" id="PS51003">
    <property type="entry name" value="CYTB_CTER"/>
    <property type="match status" value="1"/>
</dbReference>
<dbReference type="PROSITE" id="PS51002">
    <property type="entry name" value="CYTB_NTER"/>
    <property type="match status" value="1"/>
</dbReference>
<gene>
    <name type="primary">MT-CYB</name>
    <name type="synonym">COB</name>
    <name type="synonym">CYTB</name>
    <name type="synonym">MTCYB</name>
</gene>
<feature type="chain" id="PRO_0000253509" description="Cytochrome b">
    <location>
        <begin position="1"/>
        <end position="379"/>
    </location>
</feature>
<feature type="transmembrane region" description="Helical" evidence="2">
    <location>
        <begin position="33"/>
        <end position="53"/>
    </location>
</feature>
<feature type="transmembrane region" description="Helical" evidence="2">
    <location>
        <begin position="77"/>
        <end position="98"/>
    </location>
</feature>
<feature type="transmembrane region" description="Helical" evidence="2">
    <location>
        <begin position="113"/>
        <end position="133"/>
    </location>
</feature>
<feature type="transmembrane region" description="Helical" evidence="2">
    <location>
        <begin position="178"/>
        <end position="198"/>
    </location>
</feature>
<feature type="transmembrane region" description="Helical" evidence="2">
    <location>
        <begin position="226"/>
        <end position="246"/>
    </location>
</feature>
<feature type="transmembrane region" description="Helical" evidence="2">
    <location>
        <begin position="288"/>
        <end position="308"/>
    </location>
</feature>
<feature type="transmembrane region" description="Helical" evidence="2">
    <location>
        <begin position="320"/>
        <end position="340"/>
    </location>
</feature>
<feature type="transmembrane region" description="Helical" evidence="2">
    <location>
        <begin position="347"/>
        <end position="367"/>
    </location>
</feature>
<feature type="binding site" description="axial binding residue" evidence="2">
    <location>
        <position position="83"/>
    </location>
    <ligand>
        <name>heme b</name>
        <dbReference type="ChEBI" id="CHEBI:60344"/>
        <label>b562</label>
    </ligand>
    <ligandPart>
        <name>Fe</name>
        <dbReference type="ChEBI" id="CHEBI:18248"/>
    </ligandPart>
</feature>
<feature type="binding site" description="axial binding residue" evidence="2">
    <location>
        <position position="97"/>
    </location>
    <ligand>
        <name>heme b</name>
        <dbReference type="ChEBI" id="CHEBI:60344"/>
        <label>b566</label>
    </ligand>
    <ligandPart>
        <name>Fe</name>
        <dbReference type="ChEBI" id="CHEBI:18248"/>
    </ligandPart>
</feature>
<feature type="binding site" description="axial binding residue" evidence="2">
    <location>
        <position position="182"/>
    </location>
    <ligand>
        <name>heme b</name>
        <dbReference type="ChEBI" id="CHEBI:60344"/>
        <label>b562</label>
    </ligand>
    <ligandPart>
        <name>Fe</name>
        <dbReference type="ChEBI" id="CHEBI:18248"/>
    </ligandPart>
</feature>
<feature type="binding site" description="axial binding residue" evidence="2">
    <location>
        <position position="196"/>
    </location>
    <ligand>
        <name>heme b</name>
        <dbReference type="ChEBI" id="CHEBI:60344"/>
        <label>b566</label>
    </ligand>
    <ligandPart>
        <name>Fe</name>
        <dbReference type="ChEBI" id="CHEBI:18248"/>
    </ligandPart>
</feature>
<feature type="binding site" evidence="2">
    <location>
        <position position="201"/>
    </location>
    <ligand>
        <name>a ubiquinone</name>
        <dbReference type="ChEBI" id="CHEBI:16389"/>
    </ligand>
</feature>
<protein>
    <recommendedName>
        <fullName>Cytochrome b</fullName>
    </recommendedName>
    <alternativeName>
        <fullName>Complex III subunit 3</fullName>
    </alternativeName>
    <alternativeName>
        <fullName>Complex III subunit III</fullName>
    </alternativeName>
    <alternativeName>
        <fullName>Cytochrome b-c1 complex subunit 3</fullName>
    </alternativeName>
    <alternativeName>
        <fullName>Ubiquinol-cytochrome-c reductase complex cytochrome b subunit</fullName>
    </alternativeName>
</protein>
<comment type="function">
    <text evidence="2">Component of the ubiquinol-cytochrome c reductase complex (complex III or cytochrome b-c1 complex) that is part of the mitochondrial respiratory chain. The b-c1 complex mediates electron transfer from ubiquinol to cytochrome c. Contributes to the generation of a proton gradient across the mitochondrial membrane that is then used for ATP synthesis.</text>
</comment>
<comment type="cofactor">
    <cofactor evidence="2">
        <name>heme b</name>
        <dbReference type="ChEBI" id="CHEBI:60344"/>
    </cofactor>
    <text evidence="2">Binds 2 heme b groups non-covalently.</text>
</comment>
<comment type="subunit">
    <text evidence="2">The cytochrome bc1 complex contains 11 subunits: 3 respiratory subunits (MT-CYB, CYC1 and UQCRFS1), 2 core proteins (UQCRC1 and UQCRC2) and 6 low-molecular weight proteins (UQCRH/QCR6, UQCRB/QCR7, UQCRQ/QCR8, UQCR10/QCR9, UQCR11/QCR10 and a cleavage product of UQCRFS1). This cytochrome bc1 complex then forms a dimer.</text>
</comment>
<comment type="subcellular location">
    <subcellularLocation>
        <location evidence="2">Mitochondrion inner membrane</location>
        <topology evidence="2">Multi-pass membrane protein</topology>
    </subcellularLocation>
</comment>
<comment type="miscellaneous">
    <text evidence="1">Heme 1 (or BL or b562) is low-potential and absorbs at about 562 nm, and heme 2 (or BH or b566) is high-potential and absorbs at about 566 nm.</text>
</comment>
<comment type="similarity">
    <text evidence="3 4">Belongs to the cytochrome b family.</text>
</comment>
<comment type="caution">
    <text evidence="2">The full-length protein contains only eight transmembrane helices, not nine as predicted by bioinformatics tools.</text>
</comment>
<evidence type="ECO:0000250" key="1"/>
<evidence type="ECO:0000250" key="2">
    <source>
        <dbReference type="UniProtKB" id="P00157"/>
    </source>
</evidence>
<evidence type="ECO:0000255" key="3">
    <source>
        <dbReference type="PROSITE-ProRule" id="PRU00967"/>
    </source>
</evidence>
<evidence type="ECO:0000255" key="4">
    <source>
        <dbReference type="PROSITE-ProRule" id="PRU00968"/>
    </source>
</evidence>
<accession>Q5QD76</accession>
<geneLocation type="mitochondrion"/>
<sequence length="379" mass="42639">MTNIRKSHPLMKIVNNAFIDLPAPSNISSWWNFGSLLGVCLILQILTGLFLAMHYTSDTTTAFSSVTHICRDVNYGWIIRYMHANGASMFFICLYMHVGRGLYYGSYTFLETWNIGVILLLTVMATAFMGYVLPWGQMSFWGATVITNLLSAIPYIGTNLVEWIWGGFSVDKATLTRFFAFHFILPFIITAIAMVHLLFLHETGSNNPTGISSDADKIPFHPYYTIKDILGTLLLILALMLLVLFAPDLLGDPDNYTPANPLNTPPHIKPEWYFLFAYAILRSIPNKLGGVLALAFSILILILIPLLHTSKQRSMMFRPLSQCLFWTLVADLLTLTWIGGQPVEHPYITIGQLASIMYFLLILVLMPTAGTVENKLLKW</sequence>
<name>CYB_BOSGF</name>
<organism>
    <name type="scientific">Bos gaurus frontalis</name>
    <name type="common">Domestic gayal</name>
    <name type="synonym">Bos frontalis</name>
    <dbReference type="NCBI Taxonomy" id="30520"/>
    <lineage>
        <taxon>Eukaryota</taxon>
        <taxon>Metazoa</taxon>
        <taxon>Chordata</taxon>
        <taxon>Craniata</taxon>
        <taxon>Vertebrata</taxon>
        <taxon>Euteleostomi</taxon>
        <taxon>Mammalia</taxon>
        <taxon>Eutheria</taxon>
        <taxon>Laurasiatheria</taxon>
        <taxon>Artiodactyla</taxon>
        <taxon>Ruminantia</taxon>
        <taxon>Pecora</taxon>
        <taxon>Bovidae</taxon>
        <taxon>Bovinae</taxon>
        <taxon>Bos</taxon>
    </lineage>
</organism>
<keyword id="KW-0249">Electron transport</keyword>
<keyword id="KW-0349">Heme</keyword>
<keyword id="KW-0408">Iron</keyword>
<keyword id="KW-0472">Membrane</keyword>
<keyword id="KW-0479">Metal-binding</keyword>
<keyword id="KW-0496">Mitochondrion</keyword>
<keyword id="KW-0999">Mitochondrion inner membrane</keyword>
<keyword id="KW-0679">Respiratory chain</keyword>
<keyword id="KW-0812">Transmembrane</keyword>
<keyword id="KW-1133">Transmembrane helix</keyword>
<keyword id="KW-0813">Transport</keyword>
<keyword id="KW-0830">Ubiquinone</keyword>